<dbReference type="EC" id="2.8.1.13" evidence="1"/>
<dbReference type="EMBL" id="CP000436">
    <property type="protein sequence ID" value="ABI25951.1"/>
    <property type="molecule type" value="Genomic_DNA"/>
</dbReference>
<dbReference type="SMR" id="Q0I5Y6"/>
<dbReference type="KEGG" id="hso:HS_1683"/>
<dbReference type="eggNOG" id="COG0482">
    <property type="taxonomic scope" value="Bacteria"/>
</dbReference>
<dbReference type="HOGENOM" id="CLU_035188_1_0_6"/>
<dbReference type="GO" id="GO:0005737">
    <property type="term" value="C:cytoplasm"/>
    <property type="evidence" value="ECO:0007669"/>
    <property type="project" value="UniProtKB-SubCell"/>
</dbReference>
<dbReference type="GO" id="GO:0005524">
    <property type="term" value="F:ATP binding"/>
    <property type="evidence" value="ECO:0007669"/>
    <property type="project" value="UniProtKB-KW"/>
</dbReference>
<dbReference type="GO" id="GO:0000049">
    <property type="term" value="F:tRNA binding"/>
    <property type="evidence" value="ECO:0007669"/>
    <property type="project" value="UniProtKB-KW"/>
</dbReference>
<dbReference type="GO" id="GO:0103016">
    <property type="term" value="F:tRNA-uridine 2-sulfurtransferase activity"/>
    <property type="evidence" value="ECO:0007669"/>
    <property type="project" value="UniProtKB-EC"/>
</dbReference>
<dbReference type="GO" id="GO:0002143">
    <property type="term" value="P:tRNA wobble position uridine thiolation"/>
    <property type="evidence" value="ECO:0007669"/>
    <property type="project" value="TreeGrafter"/>
</dbReference>
<dbReference type="CDD" id="cd01998">
    <property type="entry name" value="MnmA_TRMU-like"/>
    <property type="match status" value="1"/>
</dbReference>
<dbReference type="FunFam" id="2.30.30.280:FF:000001">
    <property type="entry name" value="tRNA-specific 2-thiouridylase MnmA"/>
    <property type="match status" value="1"/>
</dbReference>
<dbReference type="FunFam" id="2.40.30.10:FF:000023">
    <property type="entry name" value="tRNA-specific 2-thiouridylase MnmA"/>
    <property type="match status" value="1"/>
</dbReference>
<dbReference type="FunFam" id="3.40.50.620:FF:000004">
    <property type="entry name" value="tRNA-specific 2-thiouridylase MnmA"/>
    <property type="match status" value="1"/>
</dbReference>
<dbReference type="Gene3D" id="2.30.30.280">
    <property type="entry name" value="Adenine nucleotide alpha hydrolases-like domains"/>
    <property type="match status" value="1"/>
</dbReference>
<dbReference type="Gene3D" id="3.40.50.620">
    <property type="entry name" value="HUPs"/>
    <property type="match status" value="1"/>
</dbReference>
<dbReference type="Gene3D" id="2.40.30.10">
    <property type="entry name" value="Translation factors"/>
    <property type="match status" value="1"/>
</dbReference>
<dbReference type="HAMAP" id="MF_00144">
    <property type="entry name" value="tRNA_thiouridyl_MnmA"/>
    <property type="match status" value="1"/>
</dbReference>
<dbReference type="InterPro" id="IPR004506">
    <property type="entry name" value="MnmA-like"/>
</dbReference>
<dbReference type="InterPro" id="IPR046885">
    <property type="entry name" value="MnmA-like_C"/>
</dbReference>
<dbReference type="InterPro" id="IPR046884">
    <property type="entry name" value="MnmA-like_central"/>
</dbReference>
<dbReference type="InterPro" id="IPR023382">
    <property type="entry name" value="MnmA-like_central_sf"/>
</dbReference>
<dbReference type="InterPro" id="IPR014729">
    <property type="entry name" value="Rossmann-like_a/b/a_fold"/>
</dbReference>
<dbReference type="NCBIfam" id="NF001138">
    <property type="entry name" value="PRK00143.1"/>
    <property type="match status" value="1"/>
</dbReference>
<dbReference type="NCBIfam" id="TIGR00420">
    <property type="entry name" value="trmU"/>
    <property type="match status" value="1"/>
</dbReference>
<dbReference type="PANTHER" id="PTHR11933:SF5">
    <property type="entry name" value="MITOCHONDRIAL TRNA-SPECIFIC 2-THIOURIDYLASE 1"/>
    <property type="match status" value="1"/>
</dbReference>
<dbReference type="PANTHER" id="PTHR11933">
    <property type="entry name" value="TRNA 5-METHYLAMINOMETHYL-2-THIOURIDYLATE -METHYLTRANSFERASE"/>
    <property type="match status" value="1"/>
</dbReference>
<dbReference type="Pfam" id="PF03054">
    <property type="entry name" value="tRNA_Me_trans"/>
    <property type="match status" value="1"/>
</dbReference>
<dbReference type="Pfam" id="PF20258">
    <property type="entry name" value="tRNA_Me_trans_C"/>
    <property type="match status" value="1"/>
</dbReference>
<dbReference type="Pfam" id="PF20259">
    <property type="entry name" value="tRNA_Me_trans_M"/>
    <property type="match status" value="1"/>
</dbReference>
<dbReference type="SUPFAM" id="SSF52402">
    <property type="entry name" value="Adenine nucleotide alpha hydrolases-like"/>
    <property type="match status" value="1"/>
</dbReference>
<protein>
    <recommendedName>
        <fullName evidence="1">tRNA-specific 2-thiouridylase MnmA</fullName>
        <ecNumber evidence="1">2.8.1.13</ecNumber>
    </recommendedName>
</protein>
<gene>
    <name evidence="1" type="primary">mnmA</name>
    <name type="ordered locus">HS_1683</name>
</gene>
<organism>
    <name type="scientific">Histophilus somni (strain 129Pt)</name>
    <name type="common">Haemophilus somnus</name>
    <dbReference type="NCBI Taxonomy" id="205914"/>
    <lineage>
        <taxon>Bacteria</taxon>
        <taxon>Pseudomonadati</taxon>
        <taxon>Pseudomonadota</taxon>
        <taxon>Gammaproteobacteria</taxon>
        <taxon>Pasteurellales</taxon>
        <taxon>Pasteurellaceae</taxon>
        <taxon>Histophilus</taxon>
    </lineage>
</organism>
<name>MNMA_HISS1</name>
<accession>Q0I5Y6</accession>
<sequence length="383" mass="42825">MKSIVYEKKLPKLTSLEIAKNSKKKVICGMSGGVDSSVSAFILQQQGYQVEGLFMKNWEEDDDTDYCTAANDLADAQAVCDKLGIKLHKINFAAEYWDNVFEHFLAEYKAGRTPNPDILCNKEIKFKAFLEYAVEDLGADYIATGHYVRRSDVNGQTKLLRGLDSNKDQSYFLYTLSKDQVAQSLFPVGEIEKPIVRAIAEDLGLITAKKKDSTGICFIGERKFKEFLARFLPAQPGEIRMVDGKVIGKHDGLMYYTLGQRKGLGIGGVKGLSEDPFYVVEKDLINNVLVVAQGNDNSALLSQGLIATQLYWVDRLPIRQNLRCTVKTRYRQQDIACEVIPLNDDCVEVRFDEPQIAVTPGQSAVFYQGEECLGGGVIERQIK</sequence>
<comment type="function">
    <text evidence="1">Catalyzes the 2-thiolation of uridine at the wobble position (U34) of tRNA, leading to the formation of s(2)U34.</text>
</comment>
<comment type="catalytic activity">
    <reaction evidence="1">
        <text>S-sulfanyl-L-cysteinyl-[protein] + uridine(34) in tRNA + AH2 + ATP = 2-thiouridine(34) in tRNA + L-cysteinyl-[protein] + A + AMP + diphosphate + H(+)</text>
        <dbReference type="Rhea" id="RHEA:47032"/>
        <dbReference type="Rhea" id="RHEA-COMP:10131"/>
        <dbReference type="Rhea" id="RHEA-COMP:11726"/>
        <dbReference type="Rhea" id="RHEA-COMP:11727"/>
        <dbReference type="Rhea" id="RHEA-COMP:11728"/>
        <dbReference type="ChEBI" id="CHEBI:13193"/>
        <dbReference type="ChEBI" id="CHEBI:15378"/>
        <dbReference type="ChEBI" id="CHEBI:17499"/>
        <dbReference type="ChEBI" id="CHEBI:29950"/>
        <dbReference type="ChEBI" id="CHEBI:30616"/>
        <dbReference type="ChEBI" id="CHEBI:33019"/>
        <dbReference type="ChEBI" id="CHEBI:61963"/>
        <dbReference type="ChEBI" id="CHEBI:65315"/>
        <dbReference type="ChEBI" id="CHEBI:87170"/>
        <dbReference type="ChEBI" id="CHEBI:456215"/>
        <dbReference type="EC" id="2.8.1.13"/>
    </reaction>
</comment>
<comment type="subcellular location">
    <subcellularLocation>
        <location evidence="1">Cytoplasm</location>
    </subcellularLocation>
</comment>
<comment type="similarity">
    <text evidence="1">Belongs to the MnmA/TRMU family.</text>
</comment>
<keyword id="KW-0067">ATP-binding</keyword>
<keyword id="KW-0963">Cytoplasm</keyword>
<keyword id="KW-1015">Disulfide bond</keyword>
<keyword id="KW-0547">Nucleotide-binding</keyword>
<keyword id="KW-0694">RNA-binding</keyword>
<keyword id="KW-0808">Transferase</keyword>
<keyword id="KW-0819">tRNA processing</keyword>
<keyword id="KW-0820">tRNA-binding</keyword>
<feature type="chain" id="PRO_0000349655" description="tRNA-specific 2-thiouridylase MnmA">
    <location>
        <begin position="1"/>
        <end position="383"/>
    </location>
</feature>
<feature type="region of interest" description="Interaction with target base in tRNA" evidence="1">
    <location>
        <begin position="115"/>
        <end position="117"/>
    </location>
</feature>
<feature type="region of interest" description="Interaction with tRNA" evidence="1">
    <location>
        <begin position="167"/>
        <end position="169"/>
    </location>
</feature>
<feature type="region of interest" description="Interaction with tRNA" evidence="1">
    <location>
        <begin position="329"/>
        <end position="330"/>
    </location>
</feature>
<feature type="active site" description="Nucleophile" evidence="1">
    <location>
        <position position="120"/>
    </location>
</feature>
<feature type="active site" description="Cysteine persulfide intermediate" evidence="1">
    <location>
        <position position="217"/>
    </location>
</feature>
<feature type="binding site" evidence="1">
    <location>
        <begin position="29"/>
        <end position="36"/>
    </location>
    <ligand>
        <name>ATP</name>
        <dbReference type="ChEBI" id="CHEBI:30616"/>
    </ligand>
</feature>
<feature type="binding site" evidence="1">
    <location>
        <position position="55"/>
    </location>
    <ligand>
        <name>ATP</name>
        <dbReference type="ChEBI" id="CHEBI:30616"/>
    </ligand>
</feature>
<feature type="binding site" evidence="1">
    <location>
        <position position="145"/>
    </location>
    <ligand>
        <name>ATP</name>
        <dbReference type="ChEBI" id="CHEBI:30616"/>
    </ligand>
</feature>
<feature type="site" description="Interaction with tRNA" evidence="1">
    <location>
        <position position="146"/>
    </location>
</feature>
<feature type="site" description="Interaction with tRNA" evidence="1">
    <location>
        <position position="362"/>
    </location>
</feature>
<feature type="disulfide bond" description="Alternate" evidence="1">
    <location>
        <begin position="120"/>
        <end position="217"/>
    </location>
</feature>
<proteinExistence type="inferred from homology"/>
<reference key="1">
    <citation type="journal article" date="2007" name="J. Bacteriol.">
        <title>Complete genome sequence of Haemophilus somnus (Histophilus somni) strain 129Pt and comparison to Haemophilus ducreyi 35000HP and Haemophilus influenzae Rd.</title>
        <authorList>
            <person name="Challacombe J.F."/>
            <person name="Duncan A.J."/>
            <person name="Brettin T.S."/>
            <person name="Bruce D."/>
            <person name="Chertkov O."/>
            <person name="Detter J.C."/>
            <person name="Han C.S."/>
            <person name="Misra M."/>
            <person name="Richardson P."/>
            <person name="Tapia R."/>
            <person name="Thayer N."/>
            <person name="Xie G."/>
            <person name="Inzana T.J."/>
        </authorList>
    </citation>
    <scope>NUCLEOTIDE SEQUENCE [LARGE SCALE GENOMIC DNA]</scope>
    <source>
        <strain>129Pt</strain>
    </source>
</reference>
<evidence type="ECO:0000255" key="1">
    <source>
        <dbReference type="HAMAP-Rule" id="MF_00144"/>
    </source>
</evidence>